<evidence type="ECO:0000255" key="1">
    <source>
        <dbReference type="HAMAP-Rule" id="MF_00185"/>
    </source>
</evidence>
<organism>
    <name type="scientific">Levilactobacillus brevis (strain ATCC 367 / BCRC 12310 / CIP 105137 / JCM 1170 / LMG 11437 / NCIMB 947 / NCTC 947)</name>
    <name type="common">Lactobacillus brevis</name>
    <dbReference type="NCBI Taxonomy" id="387344"/>
    <lineage>
        <taxon>Bacteria</taxon>
        <taxon>Bacillati</taxon>
        <taxon>Bacillota</taxon>
        <taxon>Bacilli</taxon>
        <taxon>Lactobacillales</taxon>
        <taxon>Lactobacillaceae</taxon>
        <taxon>Levilactobacillus</taxon>
    </lineage>
</organism>
<feature type="chain" id="PRO_1000020611" description="tRNA dimethylallyltransferase">
    <location>
        <begin position="1"/>
        <end position="307"/>
    </location>
</feature>
<feature type="region of interest" description="Interaction with substrate tRNA" evidence="1">
    <location>
        <begin position="34"/>
        <end position="37"/>
    </location>
</feature>
<feature type="binding site" evidence="1">
    <location>
        <begin position="9"/>
        <end position="16"/>
    </location>
    <ligand>
        <name>ATP</name>
        <dbReference type="ChEBI" id="CHEBI:30616"/>
    </ligand>
</feature>
<feature type="binding site" evidence="1">
    <location>
        <begin position="11"/>
        <end position="16"/>
    </location>
    <ligand>
        <name>substrate</name>
    </ligand>
</feature>
<feature type="site" description="Interaction with substrate tRNA" evidence="1">
    <location>
        <position position="100"/>
    </location>
</feature>
<feature type="site" description="Interaction with substrate tRNA" evidence="1">
    <location>
        <position position="124"/>
    </location>
</feature>
<comment type="function">
    <text evidence="1">Catalyzes the transfer of a dimethylallyl group onto the adenine at position 37 in tRNAs that read codons beginning with uridine, leading to the formation of N6-(dimethylallyl)adenosine (i(6)A).</text>
</comment>
<comment type="catalytic activity">
    <reaction evidence="1">
        <text>adenosine(37) in tRNA + dimethylallyl diphosphate = N(6)-dimethylallyladenosine(37) in tRNA + diphosphate</text>
        <dbReference type="Rhea" id="RHEA:26482"/>
        <dbReference type="Rhea" id="RHEA-COMP:10162"/>
        <dbReference type="Rhea" id="RHEA-COMP:10375"/>
        <dbReference type="ChEBI" id="CHEBI:33019"/>
        <dbReference type="ChEBI" id="CHEBI:57623"/>
        <dbReference type="ChEBI" id="CHEBI:74411"/>
        <dbReference type="ChEBI" id="CHEBI:74415"/>
        <dbReference type="EC" id="2.5.1.75"/>
    </reaction>
</comment>
<comment type="cofactor">
    <cofactor evidence="1">
        <name>Mg(2+)</name>
        <dbReference type="ChEBI" id="CHEBI:18420"/>
    </cofactor>
</comment>
<comment type="subunit">
    <text evidence="1">Monomer.</text>
</comment>
<comment type="similarity">
    <text evidence="1">Belongs to the IPP transferase family.</text>
</comment>
<reference key="1">
    <citation type="journal article" date="2006" name="Proc. Natl. Acad. Sci. U.S.A.">
        <title>Comparative genomics of the lactic acid bacteria.</title>
        <authorList>
            <person name="Makarova K.S."/>
            <person name="Slesarev A."/>
            <person name="Wolf Y.I."/>
            <person name="Sorokin A."/>
            <person name="Mirkin B."/>
            <person name="Koonin E.V."/>
            <person name="Pavlov A."/>
            <person name="Pavlova N."/>
            <person name="Karamychev V."/>
            <person name="Polouchine N."/>
            <person name="Shakhova V."/>
            <person name="Grigoriev I."/>
            <person name="Lou Y."/>
            <person name="Rohksar D."/>
            <person name="Lucas S."/>
            <person name="Huang K."/>
            <person name="Goodstein D.M."/>
            <person name="Hawkins T."/>
            <person name="Plengvidhya V."/>
            <person name="Welker D."/>
            <person name="Hughes J."/>
            <person name="Goh Y."/>
            <person name="Benson A."/>
            <person name="Baldwin K."/>
            <person name="Lee J.-H."/>
            <person name="Diaz-Muniz I."/>
            <person name="Dosti B."/>
            <person name="Smeianov V."/>
            <person name="Wechter W."/>
            <person name="Barabote R."/>
            <person name="Lorca G."/>
            <person name="Altermann E."/>
            <person name="Barrangou R."/>
            <person name="Ganesan B."/>
            <person name="Xie Y."/>
            <person name="Rawsthorne H."/>
            <person name="Tamir D."/>
            <person name="Parker C."/>
            <person name="Breidt F."/>
            <person name="Broadbent J.R."/>
            <person name="Hutkins R."/>
            <person name="O'Sullivan D."/>
            <person name="Steele J."/>
            <person name="Unlu G."/>
            <person name="Saier M.H. Jr."/>
            <person name="Klaenhammer T."/>
            <person name="Richardson P."/>
            <person name="Kozyavkin S."/>
            <person name="Weimer B.C."/>
            <person name="Mills D.A."/>
        </authorList>
    </citation>
    <scope>NUCLEOTIDE SEQUENCE [LARGE SCALE GENOMIC DNA]</scope>
    <source>
        <strain>ATCC 367 / BCRC 12310 / CIP 105137 / JCM 1170 / LMG 11437 / NCIMB 947 / NCTC 947</strain>
    </source>
</reference>
<protein>
    <recommendedName>
        <fullName evidence="1">tRNA dimethylallyltransferase</fullName>
        <ecNumber evidence="1">2.5.1.75</ecNumber>
    </recommendedName>
    <alternativeName>
        <fullName evidence="1">Dimethylallyl diphosphate:tRNA dimethylallyltransferase</fullName>
        <shortName evidence="1">DMAPP:tRNA dimethylallyltransferase</shortName>
        <shortName evidence="1">DMATase</shortName>
    </alternativeName>
    <alternativeName>
        <fullName evidence="1">Isopentenyl-diphosphate:tRNA isopentenyltransferase</fullName>
        <shortName evidence="1">IPP transferase</shortName>
        <shortName evidence="1">IPPT</shortName>
        <shortName evidence="1">IPTase</shortName>
    </alternativeName>
</protein>
<gene>
    <name evidence="1" type="primary">miaA</name>
    <name type="ordered locus">LVIS_0992</name>
</gene>
<name>MIAA_LEVBA</name>
<dbReference type="EC" id="2.5.1.75" evidence="1"/>
<dbReference type="EMBL" id="CP000416">
    <property type="protein sequence ID" value="ABJ64125.1"/>
    <property type="molecule type" value="Genomic_DNA"/>
</dbReference>
<dbReference type="RefSeq" id="WP_011667715.1">
    <property type="nucleotide sequence ID" value="NC_008497.1"/>
</dbReference>
<dbReference type="SMR" id="Q03RP7"/>
<dbReference type="STRING" id="387344.LVIS_0992"/>
<dbReference type="KEGG" id="lbr:LVIS_0992"/>
<dbReference type="eggNOG" id="COG0324">
    <property type="taxonomic scope" value="Bacteria"/>
</dbReference>
<dbReference type="HOGENOM" id="CLU_032616_0_1_9"/>
<dbReference type="Proteomes" id="UP000001652">
    <property type="component" value="Chromosome"/>
</dbReference>
<dbReference type="GO" id="GO:0005524">
    <property type="term" value="F:ATP binding"/>
    <property type="evidence" value="ECO:0007669"/>
    <property type="project" value="UniProtKB-UniRule"/>
</dbReference>
<dbReference type="GO" id="GO:0052381">
    <property type="term" value="F:tRNA dimethylallyltransferase activity"/>
    <property type="evidence" value="ECO:0007669"/>
    <property type="project" value="UniProtKB-UniRule"/>
</dbReference>
<dbReference type="GO" id="GO:0006400">
    <property type="term" value="P:tRNA modification"/>
    <property type="evidence" value="ECO:0007669"/>
    <property type="project" value="TreeGrafter"/>
</dbReference>
<dbReference type="FunFam" id="1.10.20.140:FF:000001">
    <property type="entry name" value="tRNA dimethylallyltransferase"/>
    <property type="match status" value="1"/>
</dbReference>
<dbReference type="Gene3D" id="1.10.20.140">
    <property type="match status" value="1"/>
</dbReference>
<dbReference type="Gene3D" id="3.40.50.300">
    <property type="entry name" value="P-loop containing nucleotide triphosphate hydrolases"/>
    <property type="match status" value="1"/>
</dbReference>
<dbReference type="HAMAP" id="MF_00185">
    <property type="entry name" value="IPP_trans"/>
    <property type="match status" value="1"/>
</dbReference>
<dbReference type="InterPro" id="IPR039657">
    <property type="entry name" value="Dimethylallyltransferase"/>
</dbReference>
<dbReference type="InterPro" id="IPR018022">
    <property type="entry name" value="IPT"/>
</dbReference>
<dbReference type="InterPro" id="IPR027417">
    <property type="entry name" value="P-loop_NTPase"/>
</dbReference>
<dbReference type="NCBIfam" id="TIGR00174">
    <property type="entry name" value="miaA"/>
    <property type="match status" value="1"/>
</dbReference>
<dbReference type="PANTHER" id="PTHR11088">
    <property type="entry name" value="TRNA DIMETHYLALLYLTRANSFERASE"/>
    <property type="match status" value="1"/>
</dbReference>
<dbReference type="PANTHER" id="PTHR11088:SF60">
    <property type="entry name" value="TRNA DIMETHYLALLYLTRANSFERASE"/>
    <property type="match status" value="1"/>
</dbReference>
<dbReference type="Pfam" id="PF01715">
    <property type="entry name" value="IPPT"/>
    <property type="match status" value="1"/>
</dbReference>
<dbReference type="SUPFAM" id="SSF52540">
    <property type="entry name" value="P-loop containing nucleoside triphosphate hydrolases"/>
    <property type="match status" value="1"/>
</dbReference>
<accession>Q03RP7</accession>
<proteinExistence type="inferred from homology"/>
<sequence>MIKVVAVVGPTAVGKTALAIKLAQAFNGEIISGDSMQVYRHLDIGTAKATAAEQAQAPHHLIDIQDVDQQFTVAQFVAAAQPLIQAIHERGHLPIVAGGTGFYLQALFDGLKLGADAPGDPQIREHLRQIAVEQGPQVLWQQLAAQDPVAASKIPPTNIRRTVRALEVIQVTGQLFSHQQNAGSQYDEYYIGLNTARPLLYERINQRVDNMVQAGLLDEVRWLAKRGGATLPAASGIGYRELLPVLDQPEKLAAAIDQIKQDSRHYAKRQLTWFRHQTTANWYDLVQHPEVDAQILQDVTAWLTEKN</sequence>
<keyword id="KW-0067">ATP-binding</keyword>
<keyword id="KW-0460">Magnesium</keyword>
<keyword id="KW-0547">Nucleotide-binding</keyword>
<keyword id="KW-1185">Reference proteome</keyword>
<keyword id="KW-0808">Transferase</keyword>
<keyword id="KW-0819">tRNA processing</keyword>